<feature type="chain" id="PRO_0000246258" description="GPI mannosyltransferase 3">
    <location>
        <begin position="1"/>
        <end position="771"/>
    </location>
</feature>
<feature type="transmembrane region" description="Helical" evidence="2">
    <location>
        <begin position="49"/>
        <end position="69"/>
    </location>
</feature>
<feature type="transmembrane region" description="Helical" evidence="2">
    <location>
        <begin position="251"/>
        <end position="271"/>
    </location>
</feature>
<feature type="transmembrane region" description="Helical" evidence="2">
    <location>
        <begin position="285"/>
        <end position="305"/>
    </location>
</feature>
<feature type="transmembrane region" description="Helical" evidence="2">
    <location>
        <begin position="341"/>
        <end position="361"/>
    </location>
</feature>
<feature type="transmembrane region" description="Helical" evidence="2">
    <location>
        <begin position="378"/>
        <end position="398"/>
    </location>
</feature>
<feature type="transmembrane region" description="Helical" evidence="2">
    <location>
        <begin position="410"/>
        <end position="430"/>
    </location>
</feature>
<feature type="transmembrane region" description="Helical" evidence="2">
    <location>
        <begin position="441"/>
        <end position="461"/>
    </location>
</feature>
<feature type="region of interest" description="Disordered" evidence="3">
    <location>
        <begin position="1"/>
        <end position="47"/>
    </location>
</feature>
<feature type="region of interest" description="Disordered" evidence="3">
    <location>
        <begin position="575"/>
        <end position="594"/>
    </location>
</feature>
<feature type="compositionally biased region" description="Low complexity" evidence="3">
    <location>
        <begin position="10"/>
        <end position="21"/>
    </location>
</feature>
<feature type="compositionally biased region" description="Low complexity" evidence="3">
    <location>
        <begin position="36"/>
        <end position="47"/>
    </location>
</feature>
<protein>
    <recommendedName>
        <fullName>GPI mannosyltransferase 3</fullName>
        <ecNumber>2.4.1.-</ecNumber>
    </recommendedName>
    <alternativeName>
        <fullName>GPI mannosyltransferase III</fullName>
        <shortName>GPI-MT-III</shortName>
    </alternativeName>
    <alternativeName>
        <fullName>Glycosylphosphatidylinositol-anchor biosynthesis protein 10</fullName>
    </alternativeName>
</protein>
<proteinExistence type="inferred from homology"/>
<name>GPI10_ASPFU</name>
<gene>
    <name type="primary">gpi10</name>
    <name type="ORF">AFUA_4G09130</name>
</gene>
<dbReference type="EC" id="2.4.1.-"/>
<dbReference type="EMBL" id="AAHF01000005">
    <property type="protein sequence ID" value="EAL89874.1"/>
    <property type="molecule type" value="Genomic_DNA"/>
</dbReference>
<dbReference type="RefSeq" id="XP_751912.1">
    <property type="nucleotide sequence ID" value="XM_746819.1"/>
</dbReference>
<dbReference type="FunCoup" id="Q4WPG0">
    <property type="interactions" value="865"/>
</dbReference>
<dbReference type="STRING" id="330879.Q4WPG0"/>
<dbReference type="EnsemblFungi" id="EAL89874">
    <property type="protein sequence ID" value="EAL89874"/>
    <property type="gene ID" value="AFUA_4G09130"/>
</dbReference>
<dbReference type="GeneID" id="3509380"/>
<dbReference type="KEGG" id="afm:AFUA_4G09130"/>
<dbReference type="VEuPathDB" id="FungiDB:Afu4g09130"/>
<dbReference type="eggNOG" id="KOG1771">
    <property type="taxonomic scope" value="Eukaryota"/>
</dbReference>
<dbReference type="HOGENOM" id="CLU_012353_1_0_1"/>
<dbReference type="InParanoid" id="Q4WPG0"/>
<dbReference type="OMA" id="HEWPDYL"/>
<dbReference type="OrthoDB" id="416834at2759"/>
<dbReference type="UniPathway" id="UPA00196"/>
<dbReference type="Proteomes" id="UP000002530">
    <property type="component" value="Chromosome 4"/>
</dbReference>
<dbReference type="GO" id="GO:0005789">
    <property type="term" value="C:endoplasmic reticulum membrane"/>
    <property type="evidence" value="ECO:0000318"/>
    <property type="project" value="GO_Central"/>
</dbReference>
<dbReference type="GO" id="GO:0000026">
    <property type="term" value="F:alpha-1,2-mannosyltransferase activity"/>
    <property type="evidence" value="ECO:0000318"/>
    <property type="project" value="GO_Central"/>
</dbReference>
<dbReference type="GO" id="GO:0043295">
    <property type="term" value="F:glutathione binding"/>
    <property type="evidence" value="ECO:0000314"/>
    <property type="project" value="AspGD"/>
</dbReference>
<dbReference type="GO" id="GO:0006506">
    <property type="term" value="P:GPI anchor biosynthetic process"/>
    <property type="evidence" value="ECO:0000318"/>
    <property type="project" value="GO_Central"/>
</dbReference>
<dbReference type="InterPro" id="IPR005599">
    <property type="entry name" value="GPI_mannosylTrfase"/>
</dbReference>
<dbReference type="PANTHER" id="PTHR22760">
    <property type="entry name" value="GLYCOSYLTRANSFERASE"/>
    <property type="match status" value="1"/>
</dbReference>
<dbReference type="PANTHER" id="PTHR22760:SF4">
    <property type="entry name" value="GPI MANNOSYLTRANSFERASE 3"/>
    <property type="match status" value="1"/>
</dbReference>
<dbReference type="Pfam" id="PF03901">
    <property type="entry name" value="Glyco_transf_22"/>
    <property type="match status" value="1"/>
</dbReference>
<reference key="1">
    <citation type="journal article" date="2005" name="Nature">
        <title>Genomic sequence of the pathogenic and allergenic filamentous fungus Aspergillus fumigatus.</title>
        <authorList>
            <person name="Nierman W.C."/>
            <person name="Pain A."/>
            <person name="Anderson M.J."/>
            <person name="Wortman J.R."/>
            <person name="Kim H.S."/>
            <person name="Arroyo J."/>
            <person name="Berriman M."/>
            <person name="Abe K."/>
            <person name="Archer D.B."/>
            <person name="Bermejo C."/>
            <person name="Bennett J.W."/>
            <person name="Bowyer P."/>
            <person name="Chen D."/>
            <person name="Collins M."/>
            <person name="Coulsen R."/>
            <person name="Davies R."/>
            <person name="Dyer P.S."/>
            <person name="Farman M.L."/>
            <person name="Fedorova N."/>
            <person name="Fedorova N.D."/>
            <person name="Feldblyum T.V."/>
            <person name="Fischer R."/>
            <person name="Fosker N."/>
            <person name="Fraser A."/>
            <person name="Garcia J.L."/>
            <person name="Garcia M.J."/>
            <person name="Goble A."/>
            <person name="Goldman G.H."/>
            <person name="Gomi K."/>
            <person name="Griffith-Jones S."/>
            <person name="Gwilliam R."/>
            <person name="Haas B.J."/>
            <person name="Haas H."/>
            <person name="Harris D.E."/>
            <person name="Horiuchi H."/>
            <person name="Huang J."/>
            <person name="Humphray S."/>
            <person name="Jimenez J."/>
            <person name="Keller N."/>
            <person name="Khouri H."/>
            <person name="Kitamoto K."/>
            <person name="Kobayashi T."/>
            <person name="Konzack S."/>
            <person name="Kulkarni R."/>
            <person name="Kumagai T."/>
            <person name="Lafton A."/>
            <person name="Latge J.-P."/>
            <person name="Li W."/>
            <person name="Lord A."/>
            <person name="Lu C."/>
            <person name="Majoros W.H."/>
            <person name="May G.S."/>
            <person name="Miller B.L."/>
            <person name="Mohamoud Y."/>
            <person name="Molina M."/>
            <person name="Monod M."/>
            <person name="Mouyna I."/>
            <person name="Mulligan S."/>
            <person name="Murphy L.D."/>
            <person name="O'Neil S."/>
            <person name="Paulsen I."/>
            <person name="Penalva M.A."/>
            <person name="Pertea M."/>
            <person name="Price C."/>
            <person name="Pritchard B.L."/>
            <person name="Quail M.A."/>
            <person name="Rabbinowitsch E."/>
            <person name="Rawlins N."/>
            <person name="Rajandream M.A."/>
            <person name="Reichard U."/>
            <person name="Renauld H."/>
            <person name="Robson G.D."/>
            <person name="Rodriguez de Cordoba S."/>
            <person name="Rodriguez-Pena J.M."/>
            <person name="Ronning C.M."/>
            <person name="Rutter S."/>
            <person name="Salzberg S.L."/>
            <person name="Sanchez M."/>
            <person name="Sanchez-Ferrero J.C."/>
            <person name="Saunders D."/>
            <person name="Seeger K."/>
            <person name="Squares R."/>
            <person name="Squares S."/>
            <person name="Takeuchi M."/>
            <person name="Tekaia F."/>
            <person name="Turner G."/>
            <person name="Vazquez de Aldana C.R."/>
            <person name="Weidman J."/>
            <person name="White O."/>
            <person name="Woodward J.R."/>
            <person name="Yu J.-H."/>
            <person name="Fraser C.M."/>
            <person name="Galagan J.E."/>
            <person name="Asai K."/>
            <person name="Machida M."/>
            <person name="Hall N."/>
            <person name="Barrell B.G."/>
            <person name="Denning D.W."/>
        </authorList>
    </citation>
    <scope>NUCLEOTIDE SEQUENCE [LARGE SCALE GENOMIC DNA]</scope>
    <source>
        <strain>ATCC MYA-4609 / CBS 101355 / FGSC A1100 / Af293</strain>
    </source>
</reference>
<keyword id="KW-0256">Endoplasmic reticulum</keyword>
<keyword id="KW-0328">Glycosyltransferase</keyword>
<keyword id="KW-0337">GPI-anchor biosynthesis</keyword>
<keyword id="KW-0472">Membrane</keyword>
<keyword id="KW-1185">Reference proteome</keyword>
<keyword id="KW-0808">Transferase</keyword>
<keyword id="KW-0812">Transmembrane</keyword>
<keyword id="KW-1133">Transmembrane helix</keyword>
<sequence>MSSSRRRKSFTSSSSSSSPSFHSPPPTSRLRPRSPPSSNTKTSPTSTTPLATNILLSLIAFRLVNAFTVRTFFQPDEFFQSLEPAWQIAFGENQGAWITWEWRHQLRSSIHPLLFAAVYSAADVVAQLLRLSLASRADLLVAAPKTAQAVIAGLGDFYTWKLARYVYGARSYEAWATLALTVVSPWQWFCSTRTLSNCLETTITIVALYLWPWSWSFETPVRKKATRAASRERAQRGPEGSDSLQRLRQCLSLAAVACILRPTNILIWMGLASVAWFRTSWDRRAILVREVLLCGCAVLGLSCVVDRLFYGSWTFPPLRFLYFNIAQSLAVFYGRNDWHYYVSQGFPLLLTTALPFALVGLYRALAQVRTFGLGHLQSLVQAQLALICVIMPFVLSLVSHKEVRFIYPLLPSLHILSAPPLVDYFLPAVIRSSRSYTPRRLTLIFLLLVNIVIALYTTIYHASGPSNILSYLRQQHELHAPAAQTPSNLRPSVKDPSPHGITAGFLMPCHSTPWRSHLIYPTIHAWALTCEPPVDQTAAQKATYIDEADQFYANPARFLREHMAGGLRHISRKPSYLSAQPRPQHPSTTSTNDASHEWPDYLIFFAQLEPTLQSLLRASSYAECYRTFNTAWHDDWRRKGDIVAWCLDPAEQQAWRSATRQRDLENRERQFDRIIESFRKEASGKRDGKLSPFRRWFSSSSSVAPSSSLSLSWPTSWRWPWGQRKRTAWLGVQIPQWTRTRPSWTAWGGDWFGGWRQKKKTKKLLERDLWS</sequence>
<organism>
    <name type="scientific">Aspergillus fumigatus (strain ATCC MYA-4609 / CBS 101355 / FGSC A1100 / Af293)</name>
    <name type="common">Neosartorya fumigata</name>
    <dbReference type="NCBI Taxonomy" id="330879"/>
    <lineage>
        <taxon>Eukaryota</taxon>
        <taxon>Fungi</taxon>
        <taxon>Dikarya</taxon>
        <taxon>Ascomycota</taxon>
        <taxon>Pezizomycotina</taxon>
        <taxon>Eurotiomycetes</taxon>
        <taxon>Eurotiomycetidae</taxon>
        <taxon>Eurotiales</taxon>
        <taxon>Aspergillaceae</taxon>
        <taxon>Aspergillus</taxon>
        <taxon>Aspergillus subgen. Fumigati</taxon>
    </lineage>
</organism>
<accession>Q4WPG0</accession>
<comment type="function">
    <text evidence="1">Mannosyltransferase involved in glycosylphosphatidylinositol-anchor biosynthesis. Transfers the third mannose to Man2-GlcN-acyl-PI during GPI precursor assembly (By similarity).</text>
</comment>
<comment type="pathway">
    <text>Glycolipid biosynthesis; glycosylphosphatidylinositol-anchor biosynthesis.</text>
</comment>
<comment type="subcellular location">
    <subcellularLocation>
        <location evidence="1">Endoplasmic reticulum membrane</location>
        <topology evidence="1">Multi-pass membrane protein</topology>
    </subcellularLocation>
</comment>
<comment type="similarity">
    <text evidence="4">Belongs to the glycosyltransferase 22 family. PIGB subfamily.</text>
</comment>
<evidence type="ECO:0000250" key="1"/>
<evidence type="ECO:0000255" key="2"/>
<evidence type="ECO:0000256" key="3">
    <source>
        <dbReference type="SAM" id="MobiDB-lite"/>
    </source>
</evidence>
<evidence type="ECO:0000305" key="4"/>